<name>RECR_BURM9</name>
<protein>
    <recommendedName>
        <fullName evidence="1">Recombination protein RecR</fullName>
    </recommendedName>
</protein>
<accession>A2S287</accession>
<proteinExistence type="inferred from homology"/>
<feature type="chain" id="PRO_1000001516" description="Recombination protein RecR">
    <location>
        <begin position="1"/>
        <end position="200"/>
    </location>
</feature>
<feature type="domain" description="Toprim" evidence="1">
    <location>
        <begin position="82"/>
        <end position="177"/>
    </location>
</feature>
<feature type="zinc finger region" description="C4-type" evidence="1">
    <location>
        <begin position="59"/>
        <end position="74"/>
    </location>
</feature>
<dbReference type="EMBL" id="CP000546">
    <property type="protein sequence ID" value="ABN02939.1"/>
    <property type="molecule type" value="Genomic_DNA"/>
</dbReference>
<dbReference type="RefSeq" id="WP_004193537.1">
    <property type="nucleotide sequence ID" value="NC_008836.1"/>
</dbReference>
<dbReference type="SMR" id="A2S287"/>
<dbReference type="GeneID" id="93060489"/>
<dbReference type="KEGG" id="bml:BMA10229_A0047"/>
<dbReference type="HOGENOM" id="CLU_060739_1_2_4"/>
<dbReference type="Proteomes" id="UP000002283">
    <property type="component" value="Chromosome I"/>
</dbReference>
<dbReference type="GO" id="GO:0003677">
    <property type="term" value="F:DNA binding"/>
    <property type="evidence" value="ECO:0007669"/>
    <property type="project" value="UniProtKB-UniRule"/>
</dbReference>
<dbReference type="GO" id="GO:0008270">
    <property type="term" value="F:zinc ion binding"/>
    <property type="evidence" value="ECO:0007669"/>
    <property type="project" value="UniProtKB-KW"/>
</dbReference>
<dbReference type="GO" id="GO:0006310">
    <property type="term" value="P:DNA recombination"/>
    <property type="evidence" value="ECO:0007669"/>
    <property type="project" value="UniProtKB-UniRule"/>
</dbReference>
<dbReference type="GO" id="GO:0006281">
    <property type="term" value="P:DNA repair"/>
    <property type="evidence" value="ECO:0007669"/>
    <property type="project" value="UniProtKB-UniRule"/>
</dbReference>
<dbReference type="CDD" id="cd01025">
    <property type="entry name" value="TOPRIM_recR"/>
    <property type="match status" value="1"/>
</dbReference>
<dbReference type="Gene3D" id="3.40.1360.10">
    <property type="match status" value="1"/>
</dbReference>
<dbReference type="Gene3D" id="6.10.250.240">
    <property type="match status" value="1"/>
</dbReference>
<dbReference type="Gene3D" id="1.10.8.420">
    <property type="entry name" value="RecR Domain 1"/>
    <property type="match status" value="1"/>
</dbReference>
<dbReference type="HAMAP" id="MF_00017">
    <property type="entry name" value="RecR"/>
    <property type="match status" value="1"/>
</dbReference>
<dbReference type="InterPro" id="IPR000093">
    <property type="entry name" value="DNA_Rcmb_RecR"/>
</dbReference>
<dbReference type="InterPro" id="IPR023627">
    <property type="entry name" value="Rcmb_RecR"/>
</dbReference>
<dbReference type="InterPro" id="IPR015967">
    <property type="entry name" value="Rcmb_RecR_Znf"/>
</dbReference>
<dbReference type="InterPro" id="IPR006171">
    <property type="entry name" value="TOPRIM_dom"/>
</dbReference>
<dbReference type="InterPro" id="IPR034137">
    <property type="entry name" value="TOPRIM_RecR"/>
</dbReference>
<dbReference type="NCBIfam" id="TIGR00615">
    <property type="entry name" value="recR"/>
    <property type="match status" value="1"/>
</dbReference>
<dbReference type="PANTHER" id="PTHR30446">
    <property type="entry name" value="RECOMBINATION PROTEIN RECR"/>
    <property type="match status" value="1"/>
</dbReference>
<dbReference type="PANTHER" id="PTHR30446:SF0">
    <property type="entry name" value="RECOMBINATION PROTEIN RECR"/>
    <property type="match status" value="1"/>
</dbReference>
<dbReference type="Pfam" id="PF21175">
    <property type="entry name" value="RecR_C"/>
    <property type="match status" value="1"/>
</dbReference>
<dbReference type="Pfam" id="PF21176">
    <property type="entry name" value="RecR_HhH"/>
    <property type="match status" value="1"/>
</dbReference>
<dbReference type="Pfam" id="PF02132">
    <property type="entry name" value="RecR_ZnF"/>
    <property type="match status" value="1"/>
</dbReference>
<dbReference type="Pfam" id="PF13662">
    <property type="entry name" value="Toprim_4"/>
    <property type="match status" value="1"/>
</dbReference>
<dbReference type="SMART" id="SM00493">
    <property type="entry name" value="TOPRIM"/>
    <property type="match status" value="1"/>
</dbReference>
<dbReference type="SUPFAM" id="SSF111304">
    <property type="entry name" value="Recombination protein RecR"/>
    <property type="match status" value="1"/>
</dbReference>
<dbReference type="PROSITE" id="PS01300">
    <property type="entry name" value="RECR"/>
    <property type="match status" value="1"/>
</dbReference>
<dbReference type="PROSITE" id="PS50880">
    <property type="entry name" value="TOPRIM"/>
    <property type="match status" value="1"/>
</dbReference>
<reference key="1">
    <citation type="journal article" date="2010" name="Genome Biol. Evol.">
        <title>Continuing evolution of Burkholderia mallei through genome reduction and large-scale rearrangements.</title>
        <authorList>
            <person name="Losada L."/>
            <person name="Ronning C.M."/>
            <person name="DeShazer D."/>
            <person name="Woods D."/>
            <person name="Fedorova N."/>
            <person name="Kim H.S."/>
            <person name="Shabalina S.A."/>
            <person name="Pearson T.R."/>
            <person name="Brinkac L."/>
            <person name="Tan P."/>
            <person name="Nandi T."/>
            <person name="Crabtree J."/>
            <person name="Badger J."/>
            <person name="Beckstrom-Sternberg S."/>
            <person name="Saqib M."/>
            <person name="Schutzer S.E."/>
            <person name="Keim P."/>
            <person name="Nierman W.C."/>
        </authorList>
    </citation>
    <scope>NUCLEOTIDE SEQUENCE [LARGE SCALE GENOMIC DNA]</scope>
    <source>
        <strain>NCTC 10229</strain>
    </source>
</reference>
<comment type="function">
    <text evidence="1">May play a role in DNA repair. It seems to be involved in an RecBC-independent recombinational process of DNA repair. It may act with RecF and RecO.</text>
</comment>
<comment type="similarity">
    <text evidence="1">Belongs to the RecR family.</text>
</comment>
<organism>
    <name type="scientific">Burkholderia mallei (strain NCTC 10229)</name>
    <dbReference type="NCBI Taxonomy" id="412022"/>
    <lineage>
        <taxon>Bacteria</taxon>
        <taxon>Pseudomonadati</taxon>
        <taxon>Pseudomonadota</taxon>
        <taxon>Betaproteobacteria</taxon>
        <taxon>Burkholderiales</taxon>
        <taxon>Burkholderiaceae</taxon>
        <taxon>Burkholderia</taxon>
        <taxon>pseudomallei group</taxon>
    </lineage>
</organism>
<sequence length="200" mass="22056">MSIKPPSALSELVEALRALPGVGPKSAQRIAYHLMQHDREGAERLGRSLLFATEHLRHCEKCNTFTEAQICEVCSDPERDPALLCVVETPADQIMLEQTMTYRGLYFVLMGRLSPLDGIGPKEIHFDRLVRRASDGIVKEVVLATNFTNEGEATAHYLGQTLKARGLAVTRLARGVPVGGELEYVDAGTIARAMLDRRTL</sequence>
<keyword id="KW-0227">DNA damage</keyword>
<keyword id="KW-0233">DNA recombination</keyword>
<keyword id="KW-0234">DNA repair</keyword>
<keyword id="KW-0479">Metal-binding</keyword>
<keyword id="KW-0862">Zinc</keyword>
<keyword id="KW-0863">Zinc-finger</keyword>
<evidence type="ECO:0000255" key="1">
    <source>
        <dbReference type="HAMAP-Rule" id="MF_00017"/>
    </source>
</evidence>
<gene>
    <name evidence="1" type="primary">recR</name>
    <name type="ordered locus">BMA10229_A0047</name>
</gene>